<dbReference type="EMBL" id="CP000468">
    <property type="protein sequence ID" value="ABI99766.1"/>
    <property type="molecule type" value="Genomic_DNA"/>
</dbReference>
<dbReference type="SMR" id="A1A7X7"/>
<dbReference type="KEGG" id="ecv:APECO1_1703"/>
<dbReference type="HOGENOM" id="CLU_128111_0_0_6"/>
<dbReference type="Proteomes" id="UP000008216">
    <property type="component" value="Chromosome"/>
</dbReference>
<dbReference type="GO" id="GO:0005737">
    <property type="term" value="C:cytoplasm"/>
    <property type="evidence" value="ECO:0007669"/>
    <property type="project" value="UniProtKB-SubCell"/>
</dbReference>
<dbReference type="GO" id="GO:0003677">
    <property type="term" value="F:DNA binding"/>
    <property type="evidence" value="ECO:0007669"/>
    <property type="project" value="UniProtKB-KW"/>
</dbReference>
<dbReference type="GO" id="GO:0006355">
    <property type="term" value="P:regulation of DNA-templated transcription"/>
    <property type="evidence" value="ECO:0007669"/>
    <property type="project" value="InterPro"/>
</dbReference>
<dbReference type="CDD" id="cd06170">
    <property type="entry name" value="LuxR_C_like"/>
    <property type="match status" value="1"/>
</dbReference>
<dbReference type="Gene3D" id="1.10.10.10">
    <property type="entry name" value="Winged helix-like DNA-binding domain superfamily/Winged helix DNA-binding domain"/>
    <property type="match status" value="1"/>
</dbReference>
<dbReference type="InterPro" id="IPR016032">
    <property type="entry name" value="Sig_transdc_resp-reg_C-effctor"/>
</dbReference>
<dbReference type="InterPro" id="IPR000792">
    <property type="entry name" value="Tscrpt_reg_LuxR_C"/>
</dbReference>
<dbReference type="InterPro" id="IPR036388">
    <property type="entry name" value="WH-like_DNA-bd_sf"/>
</dbReference>
<dbReference type="Pfam" id="PF00196">
    <property type="entry name" value="GerE"/>
    <property type="match status" value="1"/>
</dbReference>
<dbReference type="PRINTS" id="PR00038">
    <property type="entry name" value="HTHLUXR"/>
</dbReference>
<dbReference type="SMART" id="SM00421">
    <property type="entry name" value="HTH_LUXR"/>
    <property type="match status" value="1"/>
</dbReference>
<dbReference type="SUPFAM" id="SSF46894">
    <property type="entry name" value="C-terminal effector domain of the bipartite response regulators"/>
    <property type="match status" value="1"/>
</dbReference>
<dbReference type="PROSITE" id="PS50043">
    <property type="entry name" value="HTH_LUXR_2"/>
    <property type="match status" value="1"/>
</dbReference>
<accession>A1A7X7</accession>
<feature type="chain" id="PRO_0000369182" description="HTH-type transcriptional regulator EcpR">
    <location>
        <begin position="1"/>
        <end position="196"/>
    </location>
</feature>
<feature type="domain" description="HTH luxR-type" evidence="2">
    <location>
        <begin position="138"/>
        <end position="196"/>
    </location>
</feature>
<feature type="DNA-binding region" description="H-T-H motif" evidence="2">
    <location>
        <begin position="162"/>
        <end position="181"/>
    </location>
</feature>
<organism>
    <name type="scientific">Escherichia coli O1:K1 / APEC</name>
    <dbReference type="NCBI Taxonomy" id="405955"/>
    <lineage>
        <taxon>Bacteria</taxon>
        <taxon>Pseudomonadati</taxon>
        <taxon>Pseudomonadota</taxon>
        <taxon>Gammaproteobacteria</taxon>
        <taxon>Enterobacterales</taxon>
        <taxon>Enterobacteriaceae</taxon>
        <taxon>Escherichia</taxon>
    </lineage>
</organism>
<keyword id="KW-0010">Activator</keyword>
<keyword id="KW-0963">Cytoplasm</keyword>
<keyword id="KW-0238">DNA-binding</keyword>
<keyword id="KW-1185">Reference proteome</keyword>
<keyword id="KW-0804">Transcription</keyword>
<keyword id="KW-0805">Transcription regulation</keyword>
<sequence length="196" mass="23299">MTWQNDYSRDYEVKNHMECQNRSDKYIWSPHDAYFYKGLSELIVDIDRLIYLSLEKIRKDFVFINLNTDSLTEFINRDNEWLSAVKGKQVVLIAARKSEALANYWYYNSNIRGVVYAGLSRDIRKELAYVINGRFLRKDIKKDKITDREMEIIRMTAQGMLPKSIARIENCSVKTVYTHRRNAEAKLYSKLYKLVQ</sequence>
<protein>
    <recommendedName>
        <fullName>HTH-type transcriptional regulator EcpR</fullName>
    </recommendedName>
</protein>
<comment type="function">
    <text evidence="1">Part of the ecpRABCDE operon, which encodes the E.coli common pilus (ECP). ECP is found in both commensal and pathogenic strains and plays a dual role in early-stage biofilm development and host cell recognition. Positively regulates the expression of the ecp operon (By similarity).</text>
</comment>
<comment type="subcellular location">
    <subcellularLocation>
        <location evidence="3">Cytoplasm</location>
    </subcellularLocation>
</comment>
<comment type="induction">
    <text evidence="1">Negatively regulated by H-NS. Positively autoregulated. Also positively regulated by IHF (By similarity).</text>
</comment>
<comment type="similarity">
    <text evidence="3">Belongs to the EcpR/MatA family.</text>
</comment>
<reference key="1">
    <citation type="journal article" date="2007" name="J. Bacteriol.">
        <title>The genome sequence of avian pathogenic Escherichia coli strain O1:K1:H7 shares strong similarities with human extraintestinal pathogenic E. coli genomes.</title>
        <authorList>
            <person name="Johnson T.J."/>
            <person name="Kariyawasam S."/>
            <person name="Wannemuehler Y."/>
            <person name="Mangiamele P."/>
            <person name="Johnson S.J."/>
            <person name="Doetkott C."/>
            <person name="Skyberg J.A."/>
            <person name="Lynne A.M."/>
            <person name="Johnson J.R."/>
            <person name="Nolan L.K."/>
        </authorList>
    </citation>
    <scope>NUCLEOTIDE SEQUENCE [LARGE SCALE GENOMIC DNA]</scope>
</reference>
<gene>
    <name type="primary">ecpR</name>
    <name type="synonym">matA</name>
    <name type="ordered locus">Ecok1_02730</name>
    <name type="ORF">APECO1_1703</name>
</gene>
<name>ECPR_ECOK1</name>
<evidence type="ECO:0000250" key="1"/>
<evidence type="ECO:0000255" key="2">
    <source>
        <dbReference type="PROSITE-ProRule" id="PRU00411"/>
    </source>
</evidence>
<evidence type="ECO:0000305" key="3"/>
<proteinExistence type="inferred from homology"/>